<protein>
    <recommendedName>
        <fullName evidence="1">S-adenosylmethionine:tRNA ribosyltransferase-isomerase</fullName>
        <ecNumber evidence="1">2.4.99.17</ecNumber>
    </recommendedName>
    <alternativeName>
        <fullName evidence="1">Queuosine biosynthesis protein QueA</fullName>
    </alternativeName>
</protein>
<sequence length="362" mass="40025">MRVADFSFELPESLIAHYPQPQRSGCRLLSLDGPTGALTHGIFTDLLDKLVPGDLLVFNNTRVIPARLFGRKASGGKLEVLVERVLDDHRVLAHVKASKAPKPGTELLLGDDESIHATMLARHDTLFELRFDDERDVFTILDAVGHMPLPPYIDRPDEDADRELYQTVYSQRLGAVAAPTAGLHFDEPMLAALREKGIEMAFVTLHVGAGTFQPVRVETIEDHIMHSEYAEVPQEVVDAVLACKARGNRVVAVGTTSVRSLESAAKSSDNGLIAPFFGDTKIFIYPGYHYQVVDALITNFHLPESTLIMLVSAFAGYKNTMNAYQQAVAEQYRFFSYGDAMFISRNPQASTEMISLNSTDNQ</sequence>
<organism>
    <name type="scientific">Yersinia enterocolitica serotype O:8 / biotype 1B (strain NCTC 13174 / 8081)</name>
    <dbReference type="NCBI Taxonomy" id="393305"/>
    <lineage>
        <taxon>Bacteria</taxon>
        <taxon>Pseudomonadati</taxon>
        <taxon>Pseudomonadota</taxon>
        <taxon>Gammaproteobacteria</taxon>
        <taxon>Enterobacterales</taxon>
        <taxon>Yersiniaceae</taxon>
        <taxon>Yersinia</taxon>
    </lineage>
</organism>
<evidence type="ECO:0000255" key="1">
    <source>
        <dbReference type="HAMAP-Rule" id="MF_00113"/>
    </source>
</evidence>
<reference key="1">
    <citation type="journal article" date="2006" name="PLoS Genet.">
        <title>The complete genome sequence and comparative genome analysis of the high pathogenicity Yersinia enterocolitica strain 8081.</title>
        <authorList>
            <person name="Thomson N.R."/>
            <person name="Howard S."/>
            <person name="Wren B.W."/>
            <person name="Holden M.T.G."/>
            <person name="Crossman L."/>
            <person name="Challis G.L."/>
            <person name="Churcher C."/>
            <person name="Mungall K."/>
            <person name="Brooks K."/>
            <person name="Chillingworth T."/>
            <person name="Feltwell T."/>
            <person name="Abdellah Z."/>
            <person name="Hauser H."/>
            <person name="Jagels K."/>
            <person name="Maddison M."/>
            <person name="Moule S."/>
            <person name="Sanders M."/>
            <person name="Whitehead S."/>
            <person name="Quail M.A."/>
            <person name="Dougan G."/>
            <person name="Parkhill J."/>
            <person name="Prentice M.B."/>
        </authorList>
    </citation>
    <scope>NUCLEOTIDE SEQUENCE [LARGE SCALE GENOMIC DNA]</scope>
    <source>
        <strain>NCTC 13174 / 8081</strain>
    </source>
</reference>
<feature type="chain" id="PRO_1000015307" description="S-adenosylmethionine:tRNA ribosyltransferase-isomerase">
    <location>
        <begin position="1"/>
        <end position="362"/>
    </location>
</feature>
<dbReference type="EC" id="2.4.99.17" evidence="1"/>
<dbReference type="EMBL" id="AM286415">
    <property type="protein sequence ID" value="CAL13204.1"/>
    <property type="molecule type" value="Genomic_DNA"/>
</dbReference>
<dbReference type="RefSeq" id="WP_011816912.1">
    <property type="nucleotide sequence ID" value="NC_008800.1"/>
</dbReference>
<dbReference type="RefSeq" id="YP_001007350.1">
    <property type="nucleotide sequence ID" value="NC_008800.1"/>
</dbReference>
<dbReference type="SMR" id="A1JNT4"/>
<dbReference type="KEGG" id="yen:YE3172"/>
<dbReference type="PATRIC" id="fig|393305.7.peg.3372"/>
<dbReference type="eggNOG" id="COG0809">
    <property type="taxonomic scope" value="Bacteria"/>
</dbReference>
<dbReference type="HOGENOM" id="CLU_039110_1_0_6"/>
<dbReference type="OrthoDB" id="9805933at2"/>
<dbReference type="UniPathway" id="UPA00392"/>
<dbReference type="Proteomes" id="UP000000642">
    <property type="component" value="Chromosome"/>
</dbReference>
<dbReference type="GO" id="GO:0005737">
    <property type="term" value="C:cytoplasm"/>
    <property type="evidence" value="ECO:0007669"/>
    <property type="project" value="UniProtKB-SubCell"/>
</dbReference>
<dbReference type="GO" id="GO:0051075">
    <property type="term" value="F:S-adenosylmethionine:tRNA ribosyltransferase-isomerase activity"/>
    <property type="evidence" value="ECO:0007669"/>
    <property type="project" value="UniProtKB-EC"/>
</dbReference>
<dbReference type="GO" id="GO:0008616">
    <property type="term" value="P:queuosine biosynthetic process"/>
    <property type="evidence" value="ECO:0007669"/>
    <property type="project" value="UniProtKB-UniRule"/>
</dbReference>
<dbReference type="GO" id="GO:0002099">
    <property type="term" value="P:tRNA wobble guanine modification"/>
    <property type="evidence" value="ECO:0007669"/>
    <property type="project" value="TreeGrafter"/>
</dbReference>
<dbReference type="FunFam" id="2.40.10.240:FF:000001">
    <property type="entry name" value="S-adenosylmethionine:tRNA ribosyltransferase-isomerase"/>
    <property type="match status" value="1"/>
</dbReference>
<dbReference type="FunFam" id="3.40.1780.10:FF:000001">
    <property type="entry name" value="S-adenosylmethionine:tRNA ribosyltransferase-isomerase"/>
    <property type="match status" value="1"/>
</dbReference>
<dbReference type="Gene3D" id="2.40.10.240">
    <property type="entry name" value="QueA-like"/>
    <property type="match status" value="1"/>
</dbReference>
<dbReference type="Gene3D" id="3.40.1780.10">
    <property type="entry name" value="QueA-like"/>
    <property type="match status" value="1"/>
</dbReference>
<dbReference type="HAMAP" id="MF_00113">
    <property type="entry name" value="QueA"/>
    <property type="match status" value="1"/>
</dbReference>
<dbReference type="InterPro" id="IPR003699">
    <property type="entry name" value="QueA"/>
</dbReference>
<dbReference type="InterPro" id="IPR042118">
    <property type="entry name" value="QueA_dom1"/>
</dbReference>
<dbReference type="InterPro" id="IPR042119">
    <property type="entry name" value="QueA_dom2"/>
</dbReference>
<dbReference type="InterPro" id="IPR036100">
    <property type="entry name" value="QueA_sf"/>
</dbReference>
<dbReference type="NCBIfam" id="NF001140">
    <property type="entry name" value="PRK00147.1"/>
    <property type="match status" value="1"/>
</dbReference>
<dbReference type="NCBIfam" id="TIGR00113">
    <property type="entry name" value="queA"/>
    <property type="match status" value="1"/>
</dbReference>
<dbReference type="PANTHER" id="PTHR30307">
    <property type="entry name" value="S-ADENOSYLMETHIONINE:TRNA RIBOSYLTRANSFERASE-ISOMERASE"/>
    <property type="match status" value="1"/>
</dbReference>
<dbReference type="PANTHER" id="PTHR30307:SF0">
    <property type="entry name" value="S-ADENOSYLMETHIONINE:TRNA RIBOSYLTRANSFERASE-ISOMERASE"/>
    <property type="match status" value="1"/>
</dbReference>
<dbReference type="Pfam" id="PF02547">
    <property type="entry name" value="Queuosine_synth"/>
    <property type="match status" value="1"/>
</dbReference>
<dbReference type="SUPFAM" id="SSF111337">
    <property type="entry name" value="QueA-like"/>
    <property type="match status" value="1"/>
</dbReference>
<keyword id="KW-0963">Cytoplasm</keyword>
<keyword id="KW-0671">Queuosine biosynthesis</keyword>
<keyword id="KW-0949">S-adenosyl-L-methionine</keyword>
<keyword id="KW-0808">Transferase</keyword>
<gene>
    <name evidence="1" type="primary">queA</name>
    <name type="ordered locus">YE3172</name>
</gene>
<comment type="function">
    <text evidence="1">Transfers and isomerizes the ribose moiety from AdoMet to the 7-aminomethyl group of 7-deazaguanine (preQ1-tRNA) to give epoxyqueuosine (oQ-tRNA).</text>
</comment>
<comment type="catalytic activity">
    <reaction evidence="1">
        <text>7-aminomethyl-7-carbaguanosine(34) in tRNA + S-adenosyl-L-methionine = epoxyqueuosine(34) in tRNA + adenine + L-methionine + 2 H(+)</text>
        <dbReference type="Rhea" id="RHEA:32155"/>
        <dbReference type="Rhea" id="RHEA-COMP:10342"/>
        <dbReference type="Rhea" id="RHEA-COMP:18582"/>
        <dbReference type="ChEBI" id="CHEBI:15378"/>
        <dbReference type="ChEBI" id="CHEBI:16708"/>
        <dbReference type="ChEBI" id="CHEBI:57844"/>
        <dbReference type="ChEBI" id="CHEBI:59789"/>
        <dbReference type="ChEBI" id="CHEBI:82833"/>
        <dbReference type="ChEBI" id="CHEBI:194443"/>
        <dbReference type="EC" id="2.4.99.17"/>
    </reaction>
</comment>
<comment type="pathway">
    <text evidence="1">tRNA modification; tRNA-queuosine biosynthesis.</text>
</comment>
<comment type="subunit">
    <text evidence="1">Monomer.</text>
</comment>
<comment type="subcellular location">
    <subcellularLocation>
        <location evidence="1">Cytoplasm</location>
    </subcellularLocation>
</comment>
<comment type="similarity">
    <text evidence="1">Belongs to the QueA family.</text>
</comment>
<accession>A1JNT4</accession>
<name>QUEA_YERE8</name>
<proteinExistence type="inferred from homology"/>